<comment type="function">
    <text evidence="1">Catalyzes the irreversible cleavage of the glycosidic bond in both 5'-methylthioadenosine (MTA) and S-adenosylhomocysteine (SAH/AdoHcy) to adenine and the corresponding thioribose, 5'-methylthioribose and S-ribosylhomocysteine, respectively. Also cleaves 5'-deoxyadenosine, a toxic by-product of radical S-adenosylmethionine (SAM) enzymes, into 5-deoxyribose and adenine.</text>
</comment>
<comment type="catalytic activity">
    <reaction evidence="1">
        <text>S-adenosyl-L-homocysteine + H2O = S-(5-deoxy-D-ribos-5-yl)-L-homocysteine + adenine</text>
        <dbReference type="Rhea" id="RHEA:17805"/>
        <dbReference type="ChEBI" id="CHEBI:15377"/>
        <dbReference type="ChEBI" id="CHEBI:16708"/>
        <dbReference type="ChEBI" id="CHEBI:57856"/>
        <dbReference type="ChEBI" id="CHEBI:58195"/>
        <dbReference type="EC" id="3.2.2.9"/>
    </reaction>
</comment>
<comment type="catalytic activity">
    <reaction evidence="1">
        <text>S-methyl-5'-thioadenosine + H2O = 5-(methylsulfanyl)-D-ribose + adenine</text>
        <dbReference type="Rhea" id="RHEA:13617"/>
        <dbReference type="ChEBI" id="CHEBI:15377"/>
        <dbReference type="ChEBI" id="CHEBI:16708"/>
        <dbReference type="ChEBI" id="CHEBI:17509"/>
        <dbReference type="ChEBI" id="CHEBI:78440"/>
        <dbReference type="EC" id="3.2.2.9"/>
    </reaction>
</comment>
<comment type="catalytic activity">
    <reaction evidence="1">
        <text>5'-deoxyadenosine + H2O = 5-deoxy-D-ribose + adenine</text>
        <dbReference type="Rhea" id="RHEA:29859"/>
        <dbReference type="ChEBI" id="CHEBI:15377"/>
        <dbReference type="ChEBI" id="CHEBI:16708"/>
        <dbReference type="ChEBI" id="CHEBI:17319"/>
        <dbReference type="ChEBI" id="CHEBI:149540"/>
        <dbReference type="EC" id="3.2.2.9"/>
    </reaction>
    <physiologicalReaction direction="left-to-right" evidence="1">
        <dbReference type="Rhea" id="RHEA:29860"/>
    </physiologicalReaction>
</comment>
<comment type="pathway">
    <text evidence="1">Amino-acid biosynthesis; L-methionine biosynthesis via salvage pathway; S-methyl-5-thio-alpha-D-ribose 1-phosphate from S-methyl-5'-thioadenosine (hydrolase route): step 1/2.</text>
</comment>
<comment type="similarity">
    <text evidence="1">Belongs to the PNP/UDP phosphorylase family. MtnN subfamily.</text>
</comment>
<gene>
    <name evidence="1" type="primary">mtnN</name>
    <name type="ordered locus">VCM66_2302</name>
</gene>
<organism>
    <name type="scientific">Vibrio cholerae serotype O1 (strain M66-2)</name>
    <dbReference type="NCBI Taxonomy" id="579112"/>
    <lineage>
        <taxon>Bacteria</taxon>
        <taxon>Pseudomonadati</taxon>
        <taxon>Pseudomonadota</taxon>
        <taxon>Gammaproteobacteria</taxon>
        <taxon>Vibrionales</taxon>
        <taxon>Vibrionaceae</taxon>
        <taxon>Vibrio</taxon>
    </lineage>
</organism>
<sequence length="231" mass="24525">MKIGIIGAMQQEVAILKDLIEDVQEVNQAGCTFYSGQIQGVDVVLLQSGIGKVSAALGTALLISQYAPDVVINTGSAGGFDASLNVGDVVISSEVRHHDADVTAFGYEIGQMAGQPAAFKADEKLMTVAEQALAQLPNTHAVRGLICTGDAFVCTAERQQFIRQHFPSVVAVEMEASAIAQTCHQFKVPFVVVRAISDVADKESPLSFEEFLPLAAKSSSAMVLKMVELLK</sequence>
<dbReference type="EC" id="3.2.2.9" evidence="1"/>
<dbReference type="EMBL" id="CP001233">
    <property type="protein sequence ID" value="ACP06603.1"/>
    <property type="molecule type" value="Genomic_DNA"/>
</dbReference>
<dbReference type="RefSeq" id="WP_000689868.1">
    <property type="nucleotide sequence ID" value="NC_012578.1"/>
</dbReference>
<dbReference type="SMR" id="C3LQF1"/>
<dbReference type="GeneID" id="88783192"/>
<dbReference type="KEGG" id="vcm:VCM66_2302"/>
<dbReference type="HOGENOM" id="CLU_031248_2_2_6"/>
<dbReference type="UniPathway" id="UPA00904">
    <property type="reaction ID" value="UER00871"/>
</dbReference>
<dbReference type="Proteomes" id="UP000001217">
    <property type="component" value="Chromosome I"/>
</dbReference>
<dbReference type="GO" id="GO:0005829">
    <property type="term" value="C:cytosol"/>
    <property type="evidence" value="ECO:0007669"/>
    <property type="project" value="TreeGrafter"/>
</dbReference>
<dbReference type="GO" id="GO:0008782">
    <property type="term" value="F:adenosylhomocysteine nucleosidase activity"/>
    <property type="evidence" value="ECO:0007669"/>
    <property type="project" value="UniProtKB-UniRule"/>
</dbReference>
<dbReference type="GO" id="GO:0008930">
    <property type="term" value="F:methylthioadenosine nucleosidase activity"/>
    <property type="evidence" value="ECO:0007669"/>
    <property type="project" value="UniProtKB-UniRule"/>
</dbReference>
<dbReference type="GO" id="GO:0019509">
    <property type="term" value="P:L-methionine salvage from methylthioadenosine"/>
    <property type="evidence" value="ECO:0007669"/>
    <property type="project" value="UniProtKB-UniRule"/>
</dbReference>
<dbReference type="GO" id="GO:0019284">
    <property type="term" value="P:L-methionine salvage from S-adenosylmethionine"/>
    <property type="evidence" value="ECO:0007669"/>
    <property type="project" value="TreeGrafter"/>
</dbReference>
<dbReference type="GO" id="GO:0009164">
    <property type="term" value="P:nucleoside catabolic process"/>
    <property type="evidence" value="ECO:0007669"/>
    <property type="project" value="InterPro"/>
</dbReference>
<dbReference type="CDD" id="cd09008">
    <property type="entry name" value="MTAN"/>
    <property type="match status" value="1"/>
</dbReference>
<dbReference type="FunFam" id="3.40.50.1580:FF:000001">
    <property type="entry name" value="MTA/SAH nucleosidase family protein"/>
    <property type="match status" value="1"/>
</dbReference>
<dbReference type="Gene3D" id="3.40.50.1580">
    <property type="entry name" value="Nucleoside phosphorylase domain"/>
    <property type="match status" value="1"/>
</dbReference>
<dbReference type="HAMAP" id="MF_01684">
    <property type="entry name" value="Salvage_MtnN"/>
    <property type="match status" value="1"/>
</dbReference>
<dbReference type="InterPro" id="IPR010049">
    <property type="entry name" value="MTA_SAH_Nsdase"/>
</dbReference>
<dbReference type="InterPro" id="IPR000845">
    <property type="entry name" value="Nucleoside_phosphorylase_d"/>
</dbReference>
<dbReference type="InterPro" id="IPR035994">
    <property type="entry name" value="Nucleoside_phosphorylase_sf"/>
</dbReference>
<dbReference type="NCBIfam" id="TIGR01704">
    <property type="entry name" value="MTA_SAH-Nsdase"/>
    <property type="match status" value="1"/>
</dbReference>
<dbReference type="NCBIfam" id="NF004079">
    <property type="entry name" value="PRK05584.1"/>
    <property type="match status" value="1"/>
</dbReference>
<dbReference type="PANTHER" id="PTHR46832">
    <property type="entry name" value="5'-METHYLTHIOADENOSINE/S-ADENOSYLHOMOCYSTEINE NUCLEOSIDASE"/>
    <property type="match status" value="1"/>
</dbReference>
<dbReference type="PANTHER" id="PTHR46832:SF1">
    <property type="entry name" value="5'-METHYLTHIOADENOSINE_S-ADENOSYLHOMOCYSTEINE NUCLEOSIDASE"/>
    <property type="match status" value="1"/>
</dbReference>
<dbReference type="Pfam" id="PF01048">
    <property type="entry name" value="PNP_UDP_1"/>
    <property type="match status" value="1"/>
</dbReference>
<dbReference type="SUPFAM" id="SSF53167">
    <property type="entry name" value="Purine and uridine phosphorylases"/>
    <property type="match status" value="1"/>
</dbReference>
<keyword id="KW-0028">Amino-acid biosynthesis</keyword>
<keyword id="KW-0378">Hydrolase</keyword>
<keyword id="KW-0486">Methionine biosynthesis</keyword>
<accession>C3LQF1</accession>
<reference key="1">
    <citation type="journal article" date="2008" name="PLoS ONE">
        <title>A recalibrated molecular clock and independent origins for the cholera pandemic clones.</title>
        <authorList>
            <person name="Feng L."/>
            <person name="Reeves P.R."/>
            <person name="Lan R."/>
            <person name="Ren Y."/>
            <person name="Gao C."/>
            <person name="Zhou Z."/>
            <person name="Ren Y."/>
            <person name="Cheng J."/>
            <person name="Wang W."/>
            <person name="Wang J."/>
            <person name="Qian W."/>
            <person name="Li D."/>
            <person name="Wang L."/>
        </authorList>
    </citation>
    <scope>NUCLEOTIDE SEQUENCE [LARGE SCALE GENOMIC DNA]</scope>
    <source>
        <strain>M66-2</strain>
    </source>
</reference>
<evidence type="ECO:0000255" key="1">
    <source>
        <dbReference type="HAMAP-Rule" id="MF_01684"/>
    </source>
</evidence>
<protein>
    <recommendedName>
        <fullName evidence="1">5'-methylthioadenosine/S-adenosylhomocysteine nucleosidase</fullName>
        <shortName evidence="1">MTA/SAH nucleosidase</shortName>
        <shortName evidence="1">MTAN</shortName>
        <ecNumber evidence="1">3.2.2.9</ecNumber>
    </recommendedName>
    <alternativeName>
        <fullName evidence="1">5'-deoxyadenosine nucleosidase</fullName>
        <shortName evidence="1">DOA nucleosidase</shortName>
        <shortName evidence="1">dAdo nucleosidase</shortName>
    </alternativeName>
    <alternativeName>
        <fullName evidence="1">5'-methylthioadenosine nucleosidase</fullName>
        <shortName evidence="1">MTA nucleosidase</shortName>
    </alternativeName>
    <alternativeName>
        <fullName evidence="1">S-adenosylhomocysteine nucleosidase</fullName>
        <shortName evidence="1">AdoHcy nucleosidase</shortName>
        <shortName evidence="1">SAH nucleosidase</shortName>
        <shortName evidence="1">SRH nucleosidase</shortName>
    </alternativeName>
</protein>
<feature type="chain" id="PRO_1000187433" description="5'-methylthioadenosine/S-adenosylhomocysteine nucleosidase">
    <location>
        <begin position="1"/>
        <end position="231"/>
    </location>
</feature>
<feature type="active site" description="Proton acceptor" evidence="1">
    <location>
        <position position="12"/>
    </location>
</feature>
<feature type="active site" description="Proton donor" evidence="1">
    <location>
        <position position="198"/>
    </location>
</feature>
<feature type="binding site" evidence="1">
    <location>
        <position position="78"/>
    </location>
    <ligand>
        <name>substrate</name>
    </ligand>
</feature>
<feature type="binding site" evidence="1">
    <location>
        <position position="153"/>
    </location>
    <ligand>
        <name>substrate</name>
    </ligand>
</feature>
<feature type="binding site" evidence="1">
    <location>
        <begin position="174"/>
        <end position="175"/>
    </location>
    <ligand>
        <name>substrate</name>
    </ligand>
</feature>
<proteinExistence type="inferred from homology"/>
<name>MTNN_VIBCM</name>